<protein>
    <recommendedName>
        <fullName evidence="1">Large ribosomal subunit protein bL32c</fullName>
    </recommendedName>
    <alternativeName>
        <fullName evidence="2">50S ribosomal protein L32, chloroplastic</fullName>
    </alternativeName>
</protein>
<comment type="subcellular location">
    <subcellularLocation>
        <location>Plastid</location>
        <location>Chloroplast</location>
    </subcellularLocation>
</comment>
<comment type="similarity">
    <text evidence="1">Belongs to the bacterial ribosomal protein bL32 family.</text>
</comment>
<feature type="chain" id="PRO_0000172468" description="Large ribosomal subunit protein bL32c">
    <location>
        <begin position="1"/>
        <end position="51"/>
    </location>
</feature>
<dbReference type="EMBL" id="AJ271079">
    <property type="protein sequence ID" value="CAB67218.1"/>
    <property type="molecule type" value="Genomic_DNA"/>
</dbReference>
<dbReference type="RefSeq" id="NP_084750.1">
    <property type="nucleotide sequence ID" value="NC_002693.2"/>
</dbReference>
<dbReference type="SMR" id="Q9MTI3"/>
<dbReference type="GeneID" id="802766"/>
<dbReference type="GO" id="GO:0009507">
    <property type="term" value="C:chloroplast"/>
    <property type="evidence" value="ECO:0007669"/>
    <property type="project" value="UniProtKB-SubCell"/>
</dbReference>
<dbReference type="GO" id="GO:0015934">
    <property type="term" value="C:large ribosomal subunit"/>
    <property type="evidence" value="ECO:0007669"/>
    <property type="project" value="InterPro"/>
</dbReference>
<dbReference type="GO" id="GO:0003735">
    <property type="term" value="F:structural constituent of ribosome"/>
    <property type="evidence" value="ECO:0007669"/>
    <property type="project" value="InterPro"/>
</dbReference>
<dbReference type="GO" id="GO:0006412">
    <property type="term" value="P:translation"/>
    <property type="evidence" value="ECO:0007669"/>
    <property type="project" value="UniProtKB-UniRule"/>
</dbReference>
<dbReference type="HAMAP" id="MF_00340">
    <property type="entry name" value="Ribosomal_bL32"/>
    <property type="match status" value="1"/>
</dbReference>
<dbReference type="InterPro" id="IPR002677">
    <property type="entry name" value="Ribosomal_bL32"/>
</dbReference>
<dbReference type="InterPro" id="IPR044958">
    <property type="entry name" value="Ribosomal_bL32_plant/cyanobact"/>
</dbReference>
<dbReference type="InterPro" id="IPR011332">
    <property type="entry name" value="Ribosomal_zn-bd"/>
</dbReference>
<dbReference type="PANTHER" id="PTHR36083">
    <property type="entry name" value="50S RIBOSOMAL PROTEIN L32, CHLOROPLASTIC"/>
    <property type="match status" value="1"/>
</dbReference>
<dbReference type="PANTHER" id="PTHR36083:SF1">
    <property type="entry name" value="LARGE RIBOSOMAL SUBUNIT PROTEIN BL32C"/>
    <property type="match status" value="1"/>
</dbReference>
<dbReference type="Pfam" id="PF01783">
    <property type="entry name" value="Ribosomal_L32p"/>
    <property type="match status" value="1"/>
</dbReference>
<dbReference type="SUPFAM" id="SSF57829">
    <property type="entry name" value="Zn-binding ribosomal proteins"/>
    <property type="match status" value="1"/>
</dbReference>
<proteinExistence type="inferred from homology"/>
<evidence type="ECO:0000255" key="1">
    <source>
        <dbReference type="HAMAP-Rule" id="MF_00340"/>
    </source>
</evidence>
<evidence type="ECO:0000305" key="2"/>
<name>RK32_OENEH</name>
<geneLocation type="chloroplast"/>
<sequence>MAVPKKRTSISKKRIRKTIWKKKAYWASLKAFSLAKSLSTGNSKSFFYSKF</sequence>
<reference key="1">
    <citation type="journal article" date="2000" name="Mol. Gen. Genet.">
        <title>Complete nucleotide sequence of the Oenothera elata plastid chromosome, representing plastome I of the five distinguishable Euoenothera plastomes.</title>
        <authorList>
            <person name="Hupfer H."/>
            <person name="Swiatek M."/>
            <person name="Hornung S."/>
            <person name="Herrmann R.G."/>
            <person name="Maier R.M."/>
            <person name="Chiu W.-L."/>
            <person name="Sears B."/>
        </authorList>
    </citation>
    <scope>NUCLEOTIDE SEQUENCE [LARGE SCALE GENOMIC DNA]</scope>
    <source>
        <strain>cv. Johansen</strain>
    </source>
</reference>
<gene>
    <name evidence="1" type="primary">rpl32</name>
</gene>
<keyword id="KW-0150">Chloroplast</keyword>
<keyword id="KW-0934">Plastid</keyword>
<keyword id="KW-0687">Ribonucleoprotein</keyword>
<keyword id="KW-0689">Ribosomal protein</keyword>
<accession>Q9MTI3</accession>
<organism>
    <name type="scientific">Oenothera elata subsp. hookeri</name>
    <name type="common">Hooker's evening primrose</name>
    <name type="synonym">Oenothera hookeri</name>
    <dbReference type="NCBI Taxonomy" id="85636"/>
    <lineage>
        <taxon>Eukaryota</taxon>
        <taxon>Viridiplantae</taxon>
        <taxon>Streptophyta</taxon>
        <taxon>Embryophyta</taxon>
        <taxon>Tracheophyta</taxon>
        <taxon>Spermatophyta</taxon>
        <taxon>Magnoliopsida</taxon>
        <taxon>eudicotyledons</taxon>
        <taxon>Gunneridae</taxon>
        <taxon>Pentapetalae</taxon>
        <taxon>rosids</taxon>
        <taxon>malvids</taxon>
        <taxon>Myrtales</taxon>
        <taxon>Onagraceae</taxon>
        <taxon>Onagroideae</taxon>
        <taxon>Onagreae</taxon>
        <taxon>Oenothera</taxon>
    </lineage>
</organism>